<name>L18B_LUPLU</name>
<comment type="function">
    <text evidence="2 3">Class II ribonuclease (RNase), with low activity on single-strand RNA (PubMed:12079359). Binds to cytokinins (By similarity). Interacts with melatonin (By similarity).</text>
</comment>
<comment type="biophysicochemical properties">
    <phDependence>
        <text evidence="3">Optimum pH is 6-8.</text>
    </phDependence>
</comment>
<comment type="subcellular location">
    <subcellularLocation>
        <location evidence="2">Cytoplasm</location>
        <location evidence="2">Cytosol</location>
    </subcellularLocation>
</comment>
<comment type="tissue specificity">
    <text evidence="3">Ubiquitous, with higher levels in roots.</text>
</comment>
<comment type="allergen">
    <text evidence="4">Causes an allergic reaction in human.</text>
</comment>
<comment type="similarity">
    <text evidence="4">Belongs to the BetVI family.</text>
</comment>
<sequence>MGVFAFEDEHPSAVAQAKLFKALTKDSDDIIPKVIEQIQSVEIVEGNGGPGTVKKITASHGGHTSYVLHKIDAIDEASFEYNYSIVGGTGLDESLEKITFESKLLSGPDGGSIGKIKVKFHTKGDVLSDAVREEAKARGTGLFKAVEGYVLANPNY</sequence>
<keyword id="KW-0002">3D-structure</keyword>
<keyword id="KW-0020">Allergen</keyword>
<keyword id="KW-0106">Calcium</keyword>
<keyword id="KW-0963">Cytoplasm</keyword>
<keyword id="KW-0378">Hydrolase</keyword>
<keyword id="KW-0479">Metal-binding</keyword>
<keyword id="KW-0540">Nuclease</keyword>
<keyword id="KW-0568">Pathogenesis-related protein</keyword>
<keyword id="KW-0611">Plant defense</keyword>
<gene>
    <name type="primary">LLR18B</name>
</gene>
<proteinExistence type="evidence at protein level"/>
<dbReference type="EC" id="3.1.27.-" evidence="3"/>
<dbReference type="EMBL" id="X79975">
    <property type="protein sequence ID" value="CAA56299.1"/>
    <property type="molecule type" value="mRNA"/>
</dbReference>
<dbReference type="EMBL" id="AF002278">
    <property type="protein sequence ID" value="AAC12791.1"/>
    <property type="molecule type" value="Genomic_DNA"/>
</dbReference>
<dbReference type="PDB" id="1IFV">
    <property type="method" value="X-ray"/>
    <property type="resolution" value="2.25 A"/>
    <property type="chains" value="A/B=2-156"/>
</dbReference>
<dbReference type="PDBsum" id="1IFV"/>
<dbReference type="SMR" id="P52779"/>
<dbReference type="Allergome" id="9727">
    <property type="allergen name" value="Lup l 4"/>
</dbReference>
<dbReference type="EvolutionaryTrace" id="P52779"/>
<dbReference type="GO" id="GO:0005829">
    <property type="term" value="C:cytosol"/>
    <property type="evidence" value="ECO:0007669"/>
    <property type="project" value="UniProtKB-SubCell"/>
</dbReference>
<dbReference type="GO" id="GO:0005634">
    <property type="term" value="C:nucleus"/>
    <property type="evidence" value="ECO:0007669"/>
    <property type="project" value="TreeGrafter"/>
</dbReference>
<dbReference type="GO" id="GO:0010427">
    <property type="term" value="F:abscisic acid binding"/>
    <property type="evidence" value="ECO:0007669"/>
    <property type="project" value="InterPro"/>
</dbReference>
<dbReference type="GO" id="GO:0005509">
    <property type="term" value="F:calcium ion binding"/>
    <property type="evidence" value="ECO:0000250"/>
    <property type="project" value="UniProtKB"/>
</dbReference>
<dbReference type="GO" id="GO:0044373">
    <property type="term" value="F:cytokinin binding"/>
    <property type="evidence" value="ECO:0000250"/>
    <property type="project" value="UniProtKB"/>
</dbReference>
<dbReference type="GO" id="GO:1904408">
    <property type="term" value="F:melatonin binding"/>
    <property type="evidence" value="ECO:0000250"/>
    <property type="project" value="UniProtKB"/>
</dbReference>
<dbReference type="GO" id="GO:0004864">
    <property type="term" value="F:protein phosphatase inhibitor activity"/>
    <property type="evidence" value="ECO:0007669"/>
    <property type="project" value="InterPro"/>
</dbReference>
<dbReference type="GO" id="GO:0004540">
    <property type="term" value="F:RNA nuclease activity"/>
    <property type="evidence" value="ECO:0000314"/>
    <property type="project" value="UniProtKB"/>
</dbReference>
<dbReference type="GO" id="GO:0038023">
    <property type="term" value="F:signaling receptor activity"/>
    <property type="evidence" value="ECO:0007669"/>
    <property type="project" value="InterPro"/>
</dbReference>
<dbReference type="GO" id="GO:0009738">
    <property type="term" value="P:abscisic acid-activated signaling pathway"/>
    <property type="evidence" value="ECO:0007669"/>
    <property type="project" value="InterPro"/>
</dbReference>
<dbReference type="GO" id="GO:0006952">
    <property type="term" value="P:defense response"/>
    <property type="evidence" value="ECO:0007669"/>
    <property type="project" value="UniProtKB-KW"/>
</dbReference>
<dbReference type="CDD" id="cd07816">
    <property type="entry name" value="Bet_v1-like"/>
    <property type="match status" value="1"/>
</dbReference>
<dbReference type="FunFam" id="3.30.530.20:FF:000007">
    <property type="entry name" value="Major pollen allergen Bet v 1-A"/>
    <property type="match status" value="1"/>
</dbReference>
<dbReference type="Gene3D" id="3.30.530.20">
    <property type="match status" value="1"/>
</dbReference>
<dbReference type="InterPro" id="IPR000916">
    <property type="entry name" value="Bet_v_I/MLP"/>
</dbReference>
<dbReference type="InterPro" id="IPR024949">
    <property type="entry name" value="Bet_v_I_allergen"/>
</dbReference>
<dbReference type="InterPro" id="IPR050279">
    <property type="entry name" value="Plant_def-hormone_signal"/>
</dbReference>
<dbReference type="InterPro" id="IPR023393">
    <property type="entry name" value="START-like_dom_sf"/>
</dbReference>
<dbReference type="PANTHER" id="PTHR31213:SF88">
    <property type="entry name" value="ABA-RESPONSIVE PROTEIN"/>
    <property type="match status" value="1"/>
</dbReference>
<dbReference type="PANTHER" id="PTHR31213">
    <property type="entry name" value="OS08G0374000 PROTEIN-RELATED"/>
    <property type="match status" value="1"/>
</dbReference>
<dbReference type="Pfam" id="PF00407">
    <property type="entry name" value="Bet_v_1"/>
    <property type="match status" value="1"/>
</dbReference>
<dbReference type="PRINTS" id="PR00634">
    <property type="entry name" value="BETALLERGEN"/>
</dbReference>
<dbReference type="SUPFAM" id="SSF55961">
    <property type="entry name" value="Bet v1-like"/>
    <property type="match status" value="1"/>
</dbReference>
<dbReference type="PROSITE" id="PS00451">
    <property type="entry name" value="PATHOGENESIS_BETVI"/>
    <property type="match status" value="1"/>
</dbReference>
<evidence type="ECO:0000250" key="1">
    <source>
        <dbReference type="UniProtKB" id="P52778"/>
    </source>
</evidence>
<evidence type="ECO:0000250" key="2">
    <source>
        <dbReference type="UniProtKB" id="Q9LLQ2"/>
    </source>
</evidence>
<evidence type="ECO:0000269" key="3">
    <source>
    </source>
</evidence>
<evidence type="ECO:0000305" key="4"/>
<evidence type="ECO:0007829" key="5">
    <source>
        <dbReference type="PDB" id="1IFV"/>
    </source>
</evidence>
<protein>
    <recommendedName>
        <fullName>Protein LlR18B</fullName>
        <ecNumber evidence="3">3.1.27.-</ecNumber>
    </recommendedName>
    <alternativeName>
        <fullName>LlPR10.1B</fullName>
    </alternativeName>
    <allergenName evidence="4">Lup l 4</allergenName>
</protein>
<feature type="chain" id="PRO_0000154193" description="Protein LlR18B">
    <location>
        <begin position="1"/>
        <end position="156"/>
    </location>
</feature>
<feature type="binding site" evidence="1">
    <location>
        <position position="8"/>
    </location>
    <ligand>
        <name>trans-zeatin</name>
        <dbReference type="ChEBI" id="CHEBI:16522"/>
        <label>1</label>
    </ligand>
</feature>
<feature type="binding site" evidence="1">
    <location>
        <position position="28"/>
    </location>
    <ligand>
        <name>trans-zeatin</name>
        <dbReference type="ChEBI" id="CHEBI:16522"/>
        <label>2</label>
    </ligand>
</feature>
<feature type="binding site" evidence="2">
    <location>
        <position position="32"/>
    </location>
    <ligand>
        <name>Ca(2+)</name>
        <dbReference type="ChEBI" id="CHEBI:29108"/>
    </ligand>
</feature>
<feature type="binding site" evidence="2">
    <location>
        <position position="38"/>
    </location>
    <ligand>
        <name>Ca(2+)</name>
        <dbReference type="ChEBI" id="CHEBI:29108"/>
    </ligand>
</feature>
<feature type="binding site" evidence="1">
    <location>
        <position position="54"/>
    </location>
    <ligand>
        <name>trans-zeatin</name>
        <dbReference type="ChEBI" id="CHEBI:16522"/>
        <label>2</label>
    </ligand>
</feature>
<feature type="binding site" evidence="1">
    <location>
        <position position="133"/>
    </location>
    <ligand>
        <name>trans-zeatin</name>
        <dbReference type="ChEBI" id="CHEBI:16522"/>
        <label>3</label>
    </ligand>
</feature>
<feature type="binding site" evidence="1">
    <location>
        <position position="136"/>
    </location>
    <ligand>
        <name>trans-zeatin</name>
        <dbReference type="ChEBI" id="CHEBI:16522"/>
        <label>3</label>
    </ligand>
</feature>
<feature type="strand" evidence="5">
    <location>
        <begin position="3"/>
        <end position="14"/>
    </location>
</feature>
<feature type="helix" evidence="5">
    <location>
        <begin position="16"/>
        <end position="24"/>
    </location>
</feature>
<feature type="helix" evidence="5">
    <location>
        <begin position="27"/>
        <end position="34"/>
    </location>
</feature>
<feature type="strand" evidence="5">
    <location>
        <begin position="36"/>
        <end position="49"/>
    </location>
</feature>
<feature type="strand" evidence="5">
    <location>
        <begin position="53"/>
        <end position="59"/>
    </location>
</feature>
<feature type="strand" evidence="5">
    <location>
        <begin position="66"/>
        <end position="75"/>
    </location>
</feature>
<feature type="turn" evidence="5">
    <location>
        <begin position="76"/>
        <end position="79"/>
    </location>
</feature>
<feature type="strand" evidence="5">
    <location>
        <begin position="80"/>
        <end position="88"/>
    </location>
</feature>
<feature type="strand" evidence="5">
    <location>
        <begin position="95"/>
        <end position="107"/>
    </location>
</feature>
<feature type="helix" evidence="5">
    <location>
        <begin position="108"/>
        <end position="110"/>
    </location>
</feature>
<feature type="strand" evidence="5">
    <location>
        <begin position="111"/>
        <end position="125"/>
    </location>
</feature>
<feature type="helix" evidence="5">
    <location>
        <begin position="129"/>
        <end position="152"/>
    </location>
</feature>
<reference key="1">
    <citation type="online journal article" date="1995" name="Plant Gene Register">
        <title>cDNA sequences encoding for two homologues of Lupinus luteus (L.) IPR-like proteins (LlR18A and LlR18B).</title>
        <authorList>
            <person name="Sikorski M.M."/>
            <person name="Szlagowska A.E."/>
            <person name="Legocki A.B."/>
        </authorList>
        <locator>PGR95-114</locator>
    </citation>
    <scope>NUCLEOTIDE SEQUENCE [MRNA]</scope>
    <source>
        <strain>cv. Ventus</strain>
    </source>
</reference>
<reference key="2">
    <citation type="submission" date="1997-06" db="EMBL/GenBank/DDBJ databases">
        <authorList>
            <person name="Sikorski M.M."/>
            <person name="Szlagowska A.E."/>
        </authorList>
    </citation>
    <scope>NUCLEOTIDE SEQUENCE [GENOMIC DNA]</scope>
    <source>
        <strain>cv. Ventus</strain>
        <tissue>Root</tissue>
    </source>
</reference>
<reference key="3">
    <citation type="journal article" date="2002" name="J. Mol. Biol.">
        <title>Crystal structures of two homologous pathogenesis-related proteins from yellow lupine.</title>
        <authorList>
            <person name="Biesiadka J."/>
            <person name="Bujacz G."/>
            <person name="Sikorski M.M."/>
            <person name="Jaskolski M."/>
        </authorList>
    </citation>
    <scope>X-RAY CRYSTALLOGRAPHY (2.25 ANGSTROMS) OF 2-156</scope>
    <scope>FUNCTION</scope>
    <scope>BIOPHYSICOCHEMICAL PROPERTIES</scope>
    <scope>TISSUE SPECIFICITY</scope>
    <scope>CATALYTIC ACTIVITY</scope>
</reference>
<accession>P52779</accession>
<organism>
    <name type="scientific">Lupinus luteus</name>
    <name type="common">European yellow lupine</name>
    <dbReference type="NCBI Taxonomy" id="3873"/>
    <lineage>
        <taxon>Eukaryota</taxon>
        <taxon>Viridiplantae</taxon>
        <taxon>Streptophyta</taxon>
        <taxon>Embryophyta</taxon>
        <taxon>Tracheophyta</taxon>
        <taxon>Spermatophyta</taxon>
        <taxon>Magnoliopsida</taxon>
        <taxon>eudicotyledons</taxon>
        <taxon>Gunneridae</taxon>
        <taxon>Pentapetalae</taxon>
        <taxon>rosids</taxon>
        <taxon>fabids</taxon>
        <taxon>Fabales</taxon>
        <taxon>Fabaceae</taxon>
        <taxon>Papilionoideae</taxon>
        <taxon>50 kb inversion clade</taxon>
        <taxon>genistoids sensu lato</taxon>
        <taxon>core genistoids</taxon>
        <taxon>Genisteae</taxon>
        <taxon>Lupinus</taxon>
    </lineage>
</organism>